<evidence type="ECO:0000255" key="1">
    <source>
        <dbReference type="HAMAP-Rule" id="MF_01456"/>
    </source>
</evidence>
<organism>
    <name type="scientific">Pseudomonas fluorescens (strain SBW25)</name>
    <dbReference type="NCBI Taxonomy" id="216595"/>
    <lineage>
        <taxon>Bacteria</taxon>
        <taxon>Pseudomonadati</taxon>
        <taxon>Pseudomonadota</taxon>
        <taxon>Gammaproteobacteria</taxon>
        <taxon>Pseudomonadales</taxon>
        <taxon>Pseudomonadaceae</taxon>
        <taxon>Pseudomonas</taxon>
    </lineage>
</organism>
<keyword id="KW-0997">Cell inner membrane</keyword>
<keyword id="KW-1003">Cell membrane</keyword>
<keyword id="KW-0472">Membrane</keyword>
<keyword id="KW-0520">NAD</keyword>
<keyword id="KW-0874">Quinone</keyword>
<keyword id="KW-1278">Translocase</keyword>
<keyword id="KW-0812">Transmembrane</keyword>
<keyword id="KW-1133">Transmembrane helix</keyword>
<keyword id="KW-0813">Transport</keyword>
<keyword id="KW-0830">Ubiquinone</keyword>
<name>NUOK_PSEFS</name>
<gene>
    <name evidence="1" type="primary">nuoK</name>
    <name type="ordered locus">PFLU_3827</name>
</gene>
<protein>
    <recommendedName>
        <fullName evidence="1">NADH-quinone oxidoreductase subunit K</fullName>
        <ecNumber evidence="1">7.1.1.-</ecNumber>
    </recommendedName>
    <alternativeName>
        <fullName evidence="1">NADH dehydrogenase I subunit K</fullName>
    </alternativeName>
    <alternativeName>
        <fullName evidence="1">NDH-1 subunit K</fullName>
    </alternativeName>
</protein>
<proteinExistence type="inferred from homology"/>
<reference key="1">
    <citation type="journal article" date="2009" name="Genome Biol.">
        <title>Genomic and genetic analyses of diversity and plant interactions of Pseudomonas fluorescens.</title>
        <authorList>
            <person name="Silby M.W."/>
            <person name="Cerdeno-Tarraga A.M."/>
            <person name="Vernikos G.S."/>
            <person name="Giddens S.R."/>
            <person name="Jackson R.W."/>
            <person name="Preston G.M."/>
            <person name="Zhang X.-X."/>
            <person name="Moon C.D."/>
            <person name="Gehrig S.M."/>
            <person name="Godfrey S.A.C."/>
            <person name="Knight C.G."/>
            <person name="Malone J.G."/>
            <person name="Robinson Z."/>
            <person name="Spiers A.J."/>
            <person name="Harris S."/>
            <person name="Challis G.L."/>
            <person name="Yaxley A.M."/>
            <person name="Harris D."/>
            <person name="Seeger K."/>
            <person name="Murphy L."/>
            <person name="Rutter S."/>
            <person name="Squares R."/>
            <person name="Quail M.A."/>
            <person name="Saunders E."/>
            <person name="Mavromatis K."/>
            <person name="Brettin T.S."/>
            <person name="Bentley S.D."/>
            <person name="Hothersall J."/>
            <person name="Stephens E."/>
            <person name="Thomas C.M."/>
            <person name="Parkhill J."/>
            <person name="Levy S.B."/>
            <person name="Rainey P.B."/>
            <person name="Thomson N.R."/>
        </authorList>
    </citation>
    <scope>NUCLEOTIDE SEQUENCE [LARGE SCALE GENOMIC DNA]</scope>
    <source>
        <strain>SBW25</strain>
    </source>
</reference>
<dbReference type="EC" id="7.1.1.-" evidence="1"/>
<dbReference type="EMBL" id="AM181176">
    <property type="protein sequence ID" value="CAY50149.1"/>
    <property type="molecule type" value="Genomic_DNA"/>
</dbReference>
<dbReference type="RefSeq" id="WP_003174727.1">
    <property type="nucleotide sequence ID" value="NC_012660.1"/>
</dbReference>
<dbReference type="SMR" id="C3JY90"/>
<dbReference type="STRING" id="294.SRM1_03454"/>
<dbReference type="GeneID" id="97921145"/>
<dbReference type="eggNOG" id="COG0713">
    <property type="taxonomic scope" value="Bacteria"/>
</dbReference>
<dbReference type="HOGENOM" id="CLU_144724_0_1_6"/>
<dbReference type="OrthoDB" id="9801357at2"/>
<dbReference type="GO" id="GO:0030964">
    <property type="term" value="C:NADH dehydrogenase complex"/>
    <property type="evidence" value="ECO:0007669"/>
    <property type="project" value="TreeGrafter"/>
</dbReference>
<dbReference type="GO" id="GO:0005886">
    <property type="term" value="C:plasma membrane"/>
    <property type="evidence" value="ECO:0007669"/>
    <property type="project" value="UniProtKB-SubCell"/>
</dbReference>
<dbReference type="GO" id="GO:0050136">
    <property type="term" value="F:NADH:ubiquinone reductase (non-electrogenic) activity"/>
    <property type="evidence" value="ECO:0007669"/>
    <property type="project" value="UniProtKB-UniRule"/>
</dbReference>
<dbReference type="GO" id="GO:0048038">
    <property type="term" value="F:quinone binding"/>
    <property type="evidence" value="ECO:0007669"/>
    <property type="project" value="UniProtKB-KW"/>
</dbReference>
<dbReference type="GO" id="GO:0042773">
    <property type="term" value="P:ATP synthesis coupled electron transport"/>
    <property type="evidence" value="ECO:0007669"/>
    <property type="project" value="InterPro"/>
</dbReference>
<dbReference type="FunFam" id="1.10.287.3510:FF:000001">
    <property type="entry name" value="NADH-quinone oxidoreductase subunit K"/>
    <property type="match status" value="1"/>
</dbReference>
<dbReference type="Gene3D" id="1.10.287.3510">
    <property type="match status" value="1"/>
</dbReference>
<dbReference type="HAMAP" id="MF_01456">
    <property type="entry name" value="NDH1_NuoK"/>
    <property type="match status" value="1"/>
</dbReference>
<dbReference type="InterPro" id="IPR001133">
    <property type="entry name" value="NADH_UbQ_OxRdtase_chain4L/K"/>
</dbReference>
<dbReference type="InterPro" id="IPR039428">
    <property type="entry name" value="NUOK/Mnh_C1-like"/>
</dbReference>
<dbReference type="NCBIfam" id="NF004319">
    <property type="entry name" value="PRK05715.1-1"/>
    <property type="match status" value="1"/>
</dbReference>
<dbReference type="NCBIfam" id="NF004320">
    <property type="entry name" value="PRK05715.1-2"/>
    <property type="match status" value="1"/>
</dbReference>
<dbReference type="PANTHER" id="PTHR11434:SF16">
    <property type="entry name" value="NADH-UBIQUINONE OXIDOREDUCTASE CHAIN 4L"/>
    <property type="match status" value="1"/>
</dbReference>
<dbReference type="PANTHER" id="PTHR11434">
    <property type="entry name" value="NADH-UBIQUINONE OXIDOREDUCTASE SUBUNIT ND4L"/>
    <property type="match status" value="1"/>
</dbReference>
<dbReference type="Pfam" id="PF00420">
    <property type="entry name" value="Oxidored_q2"/>
    <property type="match status" value="1"/>
</dbReference>
<comment type="function">
    <text evidence="1">NDH-1 shuttles electrons from NADH, via FMN and iron-sulfur (Fe-S) centers, to quinones in the respiratory chain. The immediate electron acceptor for the enzyme in this species is believed to be ubiquinone. Couples the redox reaction to proton translocation (for every two electrons transferred, four hydrogen ions are translocated across the cytoplasmic membrane), and thus conserves the redox energy in a proton gradient.</text>
</comment>
<comment type="catalytic activity">
    <reaction evidence="1">
        <text>a quinone + NADH + 5 H(+)(in) = a quinol + NAD(+) + 4 H(+)(out)</text>
        <dbReference type="Rhea" id="RHEA:57888"/>
        <dbReference type="ChEBI" id="CHEBI:15378"/>
        <dbReference type="ChEBI" id="CHEBI:24646"/>
        <dbReference type="ChEBI" id="CHEBI:57540"/>
        <dbReference type="ChEBI" id="CHEBI:57945"/>
        <dbReference type="ChEBI" id="CHEBI:132124"/>
    </reaction>
</comment>
<comment type="subunit">
    <text evidence="1">NDH-1 is composed of 13 different subunits. Subunits NuoA, H, J, K, L, M, N constitute the membrane sector of the complex.</text>
</comment>
<comment type="subcellular location">
    <subcellularLocation>
        <location evidence="1">Cell inner membrane</location>
        <topology evidence="1">Multi-pass membrane protein</topology>
    </subcellularLocation>
</comment>
<comment type="similarity">
    <text evidence="1">Belongs to the complex I subunit 4L family.</text>
</comment>
<sequence length="102" mass="10951">MPAIPLEHGLAVAGILFCLGLVGLMVRRNILFVLMSLEIMMNAAALAFIVAGARWGQPDGQVMFILVISLAAAEASIGLAILLQLYRRFHTLDIDAASEMRG</sequence>
<accession>C3JY90</accession>
<feature type="chain" id="PRO_0000390169" description="NADH-quinone oxidoreductase subunit K">
    <location>
        <begin position="1"/>
        <end position="102"/>
    </location>
</feature>
<feature type="transmembrane region" description="Helical" evidence="1">
    <location>
        <begin position="6"/>
        <end position="26"/>
    </location>
</feature>
<feature type="transmembrane region" description="Helical" evidence="1">
    <location>
        <begin position="30"/>
        <end position="50"/>
    </location>
</feature>
<feature type="transmembrane region" description="Helical" evidence="1">
    <location>
        <begin position="62"/>
        <end position="82"/>
    </location>
</feature>